<keyword id="KW-0067">ATP-binding</keyword>
<keyword id="KW-0418">Kinase</keyword>
<keyword id="KW-0547">Nucleotide-binding</keyword>
<keyword id="KW-0808">Transferase</keyword>
<comment type="function">
    <text evidence="1">Phosphorylates Ins(1,3,4,5,6)P5 at position 2 to form Ins(1,2,3,4,5,6)P6 (InsP6 or phytate).</text>
</comment>
<comment type="catalytic activity">
    <reaction>
        <text>1D-myo-inositol 1,3,4,5,6-pentakisphosphate + ATP = 1D-myo-inositol hexakisphosphate + ADP + H(+)</text>
        <dbReference type="Rhea" id="RHEA:20313"/>
        <dbReference type="ChEBI" id="CHEBI:15378"/>
        <dbReference type="ChEBI" id="CHEBI:30616"/>
        <dbReference type="ChEBI" id="CHEBI:57733"/>
        <dbReference type="ChEBI" id="CHEBI:58130"/>
        <dbReference type="ChEBI" id="CHEBI:456216"/>
        <dbReference type="EC" id="2.7.1.158"/>
    </reaction>
</comment>
<comment type="domain">
    <text>The EXKPK motif is conserved in inositol-pentakisphosphate 2-kinases of both family 1 and 2.</text>
</comment>
<comment type="similarity">
    <text evidence="2">Belongs to the IPK1 type 2 family.</text>
</comment>
<accession>P0CO35</accession>
<accession>Q55U88</accession>
<accession>Q5KI57</accession>
<dbReference type="EC" id="2.7.1.158"/>
<dbReference type="EMBL" id="AAEY01000019">
    <property type="protein sequence ID" value="EAL21524.1"/>
    <property type="molecule type" value="Genomic_DNA"/>
</dbReference>
<dbReference type="RefSeq" id="XP_776171.1">
    <property type="nucleotide sequence ID" value="XM_771078.1"/>
</dbReference>
<dbReference type="SMR" id="P0CO35"/>
<dbReference type="EnsemblFungi" id="AAW42830">
    <property type="protein sequence ID" value="AAW42830"/>
    <property type="gene ID" value="CND04140"/>
</dbReference>
<dbReference type="GeneID" id="4935607"/>
<dbReference type="KEGG" id="cnb:CNBD2180"/>
<dbReference type="VEuPathDB" id="FungiDB:CNBD2180"/>
<dbReference type="HOGENOM" id="CLU_033188_1_0_1"/>
<dbReference type="OrthoDB" id="4002at5206"/>
<dbReference type="GO" id="GO:0005634">
    <property type="term" value="C:nucleus"/>
    <property type="evidence" value="ECO:0007669"/>
    <property type="project" value="TreeGrafter"/>
</dbReference>
<dbReference type="GO" id="GO:0005524">
    <property type="term" value="F:ATP binding"/>
    <property type="evidence" value="ECO:0007669"/>
    <property type="project" value="UniProtKB-KW"/>
</dbReference>
<dbReference type="GO" id="GO:0035299">
    <property type="term" value="F:inositol-1,3,4,5,6-pentakisphosphate 2-kinase activity"/>
    <property type="evidence" value="ECO:0007669"/>
    <property type="project" value="UniProtKB-EC"/>
</dbReference>
<dbReference type="GO" id="GO:0032958">
    <property type="term" value="P:inositol phosphate biosynthetic process"/>
    <property type="evidence" value="ECO:0007669"/>
    <property type="project" value="TreeGrafter"/>
</dbReference>
<dbReference type="Gene3D" id="3.30.200.110">
    <property type="entry name" value="Inositol-pentakisphosphate 2-kinase, N-lobe"/>
    <property type="match status" value="1"/>
</dbReference>
<dbReference type="InterPro" id="IPR009286">
    <property type="entry name" value="Ins_P5_2-kin"/>
</dbReference>
<dbReference type="InterPro" id="IPR043001">
    <property type="entry name" value="IP5_2-K_N_lobe"/>
</dbReference>
<dbReference type="PANTHER" id="PTHR14456">
    <property type="entry name" value="INOSITOL POLYPHOSPHATE KINASE 1"/>
    <property type="match status" value="1"/>
</dbReference>
<dbReference type="PANTHER" id="PTHR14456:SF2">
    <property type="entry name" value="INOSITOL-PENTAKISPHOSPHATE 2-KINASE"/>
    <property type="match status" value="1"/>
</dbReference>
<dbReference type="Pfam" id="PF06090">
    <property type="entry name" value="Ins_P5_2-kin"/>
    <property type="match status" value="1"/>
</dbReference>
<organism>
    <name type="scientific">Cryptococcus neoformans var. neoformans serotype D (strain B-3501A)</name>
    <name type="common">Filobasidiella neoformans</name>
    <dbReference type="NCBI Taxonomy" id="283643"/>
    <lineage>
        <taxon>Eukaryota</taxon>
        <taxon>Fungi</taxon>
        <taxon>Dikarya</taxon>
        <taxon>Basidiomycota</taxon>
        <taxon>Agaricomycotina</taxon>
        <taxon>Tremellomycetes</taxon>
        <taxon>Tremellales</taxon>
        <taxon>Cryptococcaceae</taxon>
        <taxon>Cryptococcus</taxon>
        <taxon>Cryptococcus neoformans species complex</taxon>
    </lineage>
</organism>
<name>IPPK_CRYNB</name>
<proteinExistence type="inferred from homology"/>
<protein>
    <recommendedName>
        <fullName>Inositol-pentakisphosphate 2-kinase</fullName>
        <ecNumber>2.7.1.158</ecNumber>
    </recommendedName>
    <alternativeName>
        <fullName>Inositol-1,3,4,5,6-pentakisphosphate 2-kinase</fullName>
    </alternativeName>
    <alternativeName>
        <fullName>Ins(1,3,4,5,6)P5 2-kinase</fullName>
        <shortName>InsP5 2-kinase</shortName>
    </alternativeName>
</protein>
<evidence type="ECO:0000250" key="1"/>
<evidence type="ECO:0000305" key="2"/>
<gene>
    <name type="primary">IPK1</name>
    <name type="ordered locus">CNBD2180</name>
</gene>
<reference key="1">
    <citation type="journal article" date="2005" name="Science">
        <title>The genome of the basidiomycetous yeast and human pathogen Cryptococcus neoformans.</title>
        <authorList>
            <person name="Loftus B.J."/>
            <person name="Fung E."/>
            <person name="Roncaglia P."/>
            <person name="Rowley D."/>
            <person name="Amedeo P."/>
            <person name="Bruno D."/>
            <person name="Vamathevan J."/>
            <person name="Miranda M."/>
            <person name="Anderson I.J."/>
            <person name="Fraser J.A."/>
            <person name="Allen J.E."/>
            <person name="Bosdet I.E."/>
            <person name="Brent M.R."/>
            <person name="Chiu R."/>
            <person name="Doering T.L."/>
            <person name="Donlin M.J."/>
            <person name="D'Souza C.A."/>
            <person name="Fox D.S."/>
            <person name="Grinberg V."/>
            <person name="Fu J."/>
            <person name="Fukushima M."/>
            <person name="Haas B.J."/>
            <person name="Huang J.C."/>
            <person name="Janbon G."/>
            <person name="Jones S.J.M."/>
            <person name="Koo H.L."/>
            <person name="Krzywinski M.I."/>
            <person name="Kwon-Chung K.J."/>
            <person name="Lengeler K.B."/>
            <person name="Maiti R."/>
            <person name="Marra M.A."/>
            <person name="Marra R.E."/>
            <person name="Mathewson C.A."/>
            <person name="Mitchell T.G."/>
            <person name="Pertea M."/>
            <person name="Riggs F.R."/>
            <person name="Salzberg S.L."/>
            <person name="Schein J.E."/>
            <person name="Shvartsbeyn A."/>
            <person name="Shin H."/>
            <person name="Shumway M."/>
            <person name="Specht C.A."/>
            <person name="Suh B.B."/>
            <person name="Tenney A."/>
            <person name="Utterback T.R."/>
            <person name="Wickes B.L."/>
            <person name="Wortman J.R."/>
            <person name="Wye N.H."/>
            <person name="Kronstad J.W."/>
            <person name="Lodge J.K."/>
            <person name="Heitman J."/>
            <person name="Davis R.W."/>
            <person name="Fraser C.M."/>
            <person name="Hyman R.W."/>
        </authorList>
    </citation>
    <scope>NUCLEOTIDE SEQUENCE [LARGE SCALE GENOMIC DNA]</scope>
    <source>
        <strain>B-3501A</strain>
    </source>
</reference>
<feature type="chain" id="PRO_0000410122" description="Inositol-pentakisphosphate 2-kinase">
    <location>
        <begin position="1"/>
        <end position="414"/>
    </location>
</feature>
<feature type="short sequence motif" description="EXKPK motif">
    <location>
        <begin position="150"/>
        <end position="154"/>
    </location>
</feature>
<sequence>MNDGNHYRPAISPNPSADTQPSDWAYIAEGGAHIVFSYQGRSKTYATRALRVRKPSATTEPLAQAEENDLFGQWRRNILPKLLPRQLLTTSREVILEDRWYKELLAMVDVVRPDQRKSGIDFAAKGDRRGVLLEDLTSSEDDGAIAVAIEIKPKWGFLPCTEHLHPPESVSIKSHVSRFRLHQHFRGCSDDPPYDPLDLFSGDKMRMRTALDGLWTMWEISRGKVNNWKVFVGGKEISPDDLQNGLLPIGGDDFVTKITQLTLDTLQTSFALPLLKNLQQNLDPIDISSLAALFQAEYPNSPPFDPDLIPDVSAVELNGFVDIYISDPQAGQRMDSWSLRERIIAYALSAIFKDCSLFIRGFLKHAEDGVWRLVSGSDSVKVIDLDLKPIKNIQKWAETDEKVWKYWLETKGAR</sequence>